<sequence>MGRSLKKGPYIDPSVEKKILAMNEKGEKKVFKTWARDCTIFPEMVGHTIAVHNGKTHVPVYITEEMVGHKLGEFAPTRTFRGHGGDERSSRVR</sequence>
<keyword id="KW-1185">Reference proteome</keyword>
<keyword id="KW-0687">Ribonucleoprotein</keyword>
<keyword id="KW-0689">Ribosomal protein</keyword>
<keyword id="KW-0694">RNA-binding</keyword>
<keyword id="KW-0699">rRNA-binding</keyword>
<proteinExistence type="inferred from homology"/>
<evidence type="ECO:0000255" key="1">
    <source>
        <dbReference type="HAMAP-Rule" id="MF_00531"/>
    </source>
</evidence>
<evidence type="ECO:0000305" key="2"/>
<comment type="function">
    <text evidence="1">Protein S19 forms a complex with S13 that binds strongly to the 16S ribosomal RNA.</text>
</comment>
<comment type="similarity">
    <text evidence="1">Belongs to the universal ribosomal protein uS19 family.</text>
</comment>
<gene>
    <name evidence="1" type="primary">rpsS</name>
    <name type="ordered locus">STH3071</name>
</gene>
<name>RS19_SYMTH</name>
<organism>
    <name type="scientific">Symbiobacterium thermophilum (strain DSM 24528 / JCM 14929 / IAM 14863 / T)</name>
    <dbReference type="NCBI Taxonomy" id="292459"/>
    <lineage>
        <taxon>Bacteria</taxon>
        <taxon>Bacillati</taxon>
        <taxon>Bacillota</taxon>
        <taxon>Clostridia</taxon>
        <taxon>Eubacteriales</taxon>
        <taxon>Symbiobacteriaceae</taxon>
        <taxon>Symbiobacterium</taxon>
    </lineage>
</organism>
<reference key="1">
    <citation type="journal article" date="2004" name="Nucleic Acids Res.">
        <title>Genome sequence of Symbiobacterium thermophilum, an uncultivable bacterium that depends on microbial commensalism.</title>
        <authorList>
            <person name="Ueda K."/>
            <person name="Yamashita A."/>
            <person name="Ishikawa J."/>
            <person name="Shimada M."/>
            <person name="Watsuji T."/>
            <person name="Morimura K."/>
            <person name="Ikeda H."/>
            <person name="Hattori M."/>
            <person name="Beppu T."/>
        </authorList>
    </citation>
    <scope>NUCLEOTIDE SEQUENCE [LARGE SCALE GENOMIC DNA]</scope>
    <source>
        <strain>DSM 24528 / JCM 14929 / IAM 14863 / T</strain>
    </source>
</reference>
<protein>
    <recommendedName>
        <fullName evidence="1">Small ribosomal subunit protein uS19</fullName>
    </recommendedName>
    <alternativeName>
        <fullName evidence="2">30S ribosomal protein S19</fullName>
    </alternativeName>
</protein>
<accession>Q67JU7</accession>
<feature type="chain" id="PRO_0000129920" description="Small ribosomal subunit protein uS19">
    <location>
        <begin position="1"/>
        <end position="93"/>
    </location>
</feature>
<dbReference type="EMBL" id="AP006840">
    <property type="protein sequence ID" value="BAD42053.1"/>
    <property type="molecule type" value="Genomic_DNA"/>
</dbReference>
<dbReference type="RefSeq" id="WP_011197186.1">
    <property type="nucleotide sequence ID" value="NC_006177.1"/>
</dbReference>
<dbReference type="SMR" id="Q67JU7"/>
<dbReference type="STRING" id="292459.STH3071"/>
<dbReference type="KEGG" id="sth:STH3071"/>
<dbReference type="eggNOG" id="COG0185">
    <property type="taxonomic scope" value="Bacteria"/>
</dbReference>
<dbReference type="HOGENOM" id="CLU_144911_0_1_9"/>
<dbReference type="OrthoDB" id="9797833at2"/>
<dbReference type="Proteomes" id="UP000000417">
    <property type="component" value="Chromosome"/>
</dbReference>
<dbReference type="GO" id="GO:0005737">
    <property type="term" value="C:cytoplasm"/>
    <property type="evidence" value="ECO:0007669"/>
    <property type="project" value="UniProtKB-ARBA"/>
</dbReference>
<dbReference type="GO" id="GO:0015935">
    <property type="term" value="C:small ribosomal subunit"/>
    <property type="evidence" value="ECO:0007669"/>
    <property type="project" value="InterPro"/>
</dbReference>
<dbReference type="GO" id="GO:0019843">
    <property type="term" value="F:rRNA binding"/>
    <property type="evidence" value="ECO:0007669"/>
    <property type="project" value="UniProtKB-UniRule"/>
</dbReference>
<dbReference type="GO" id="GO:0003735">
    <property type="term" value="F:structural constituent of ribosome"/>
    <property type="evidence" value="ECO:0007669"/>
    <property type="project" value="InterPro"/>
</dbReference>
<dbReference type="GO" id="GO:0000028">
    <property type="term" value="P:ribosomal small subunit assembly"/>
    <property type="evidence" value="ECO:0007669"/>
    <property type="project" value="TreeGrafter"/>
</dbReference>
<dbReference type="GO" id="GO:0006412">
    <property type="term" value="P:translation"/>
    <property type="evidence" value="ECO:0007669"/>
    <property type="project" value="UniProtKB-UniRule"/>
</dbReference>
<dbReference type="FunFam" id="3.30.860.10:FF:000001">
    <property type="entry name" value="30S ribosomal protein S19"/>
    <property type="match status" value="1"/>
</dbReference>
<dbReference type="Gene3D" id="3.30.860.10">
    <property type="entry name" value="30s Ribosomal Protein S19, Chain A"/>
    <property type="match status" value="1"/>
</dbReference>
<dbReference type="HAMAP" id="MF_00531">
    <property type="entry name" value="Ribosomal_uS19"/>
    <property type="match status" value="1"/>
</dbReference>
<dbReference type="InterPro" id="IPR002222">
    <property type="entry name" value="Ribosomal_uS19"/>
</dbReference>
<dbReference type="InterPro" id="IPR005732">
    <property type="entry name" value="Ribosomal_uS19_bac-type"/>
</dbReference>
<dbReference type="InterPro" id="IPR020934">
    <property type="entry name" value="Ribosomal_uS19_CS"/>
</dbReference>
<dbReference type="InterPro" id="IPR023575">
    <property type="entry name" value="Ribosomal_uS19_SF"/>
</dbReference>
<dbReference type="NCBIfam" id="TIGR01050">
    <property type="entry name" value="rpsS_bact"/>
    <property type="match status" value="1"/>
</dbReference>
<dbReference type="PANTHER" id="PTHR11880">
    <property type="entry name" value="RIBOSOMAL PROTEIN S19P FAMILY MEMBER"/>
    <property type="match status" value="1"/>
</dbReference>
<dbReference type="PANTHER" id="PTHR11880:SF8">
    <property type="entry name" value="SMALL RIBOSOMAL SUBUNIT PROTEIN US19M"/>
    <property type="match status" value="1"/>
</dbReference>
<dbReference type="Pfam" id="PF00203">
    <property type="entry name" value="Ribosomal_S19"/>
    <property type="match status" value="1"/>
</dbReference>
<dbReference type="PIRSF" id="PIRSF002144">
    <property type="entry name" value="Ribosomal_S19"/>
    <property type="match status" value="1"/>
</dbReference>
<dbReference type="PRINTS" id="PR00975">
    <property type="entry name" value="RIBOSOMALS19"/>
</dbReference>
<dbReference type="SUPFAM" id="SSF54570">
    <property type="entry name" value="Ribosomal protein S19"/>
    <property type="match status" value="1"/>
</dbReference>
<dbReference type="PROSITE" id="PS00323">
    <property type="entry name" value="RIBOSOMAL_S19"/>
    <property type="match status" value="1"/>
</dbReference>